<feature type="chain" id="PRO_0000133278" description="Protein E4">
    <location>
        <begin position="1"/>
        <end position="105"/>
    </location>
</feature>
<feature type="region of interest" description="Disordered" evidence="2">
    <location>
        <begin position="24"/>
        <end position="85"/>
    </location>
</feature>
<feature type="compositionally biased region" description="Low complexity" evidence="2">
    <location>
        <begin position="24"/>
        <end position="38"/>
    </location>
</feature>
<feature type="compositionally biased region" description="Basic residues" evidence="2">
    <location>
        <begin position="39"/>
        <end position="52"/>
    </location>
</feature>
<feature type="compositionally biased region" description="Low complexity" evidence="2">
    <location>
        <begin position="53"/>
        <end position="66"/>
    </location>
</feature>
<reference key="1">
    <citation type="journal article" date="1990" name="Virus Res.">
        <title>A comparative sequence analysis of two human papillomavirus (HPV) types 2a and 57.</title>
        <authorList>
            <person name="Hirsch-Behnam A."/>
            <person name="Delius H."/>
            <person name="de Villiers E.M."/>
        </authorList>
    </citation>
    <scope>NUCLEOTIDE SEQUENCE [GENOMIC DNA]</scope>
</reference>
<keyword id="KW-0244">Early protein</keyword>
<keyword id="KW-1035">Host cytoplasm</keyword>
<keyword id="KW-1079">Host G2/M cell cycle arrest by virus</keyword>
<keyword id="KW-1048">Host nucleus</keyword>
<keyword id="KW-0945">Host-virus interaction</keyword>
<keyword id="KW-1121">Modulation of host cell cycle by virus</keyword>
<keyword id="KW-0597">Phosphoprotein</keyword>
<evidence type="ECO:0000250" key="1">
    <source>
        <dbReference type="UniProtKB" id="P06922"/>
    </source>
</evidence>
<evidence type="ECO:0000256" key="2">
    <source>
        <dbReference type="SAM" id="MobiDB-lite"/>
    </source>
</evidence>
<evidence type="ECO:0000305" key="3"/>
<proteinExistence type="inferred from homology"/>
<sequence>MEDSEVPRPPPRTTTHYPLLDLLRPQSQPQPQPQQQSRPHSRTPPRRHRVRHPSASGSSSDSSGNSPTLRGRSEKGRWSVKTTGASVTLTAQTPGGATVTLTLCL</sequence>
<name>VE4_HPV57</name>
<accession>P22157</accession>
<organismHost>
    <name type="scientific">Homo sapiens</name>
    <name type="common">Human</name>
    <dbReference type="NCBI Taxonomy" id="9606"/>
</organismHost>
<organism>
    <name type="scientific">Human papillomavirus 57</name>
    <dbReference type="NCBI Taxonomy" id="333753"/>
    <lineage>
        <taxon>Viruses</taxon>
        <taxon>Monodnaviria</taxon>
        <taxon>Shotokuvirae</taxon>
        <taxon>Cossaviricota</taxon>
        <taxon>Papovaviricetes</taxon>
        <taxon>Zurhausenvirales</taxon>
        <taxon>Papillomaviridae</taxon>
        <taxon>Firstpapillomavirinae</taxon>
        <taxon>Alphapapillomavirus</taxon>
        <taxon>Alphapapillomavirus 4</taxon>
    </lineage>
</organism>
<comment type="function">
    <text evidence="1">Contributes to multiple aspects of the viral life cycle including viral genome amplification, suppression of suprabasal cell differentiation and egress of newly formed virions. Induces host cell cycle arrest at the G2 phase by associating with and preventing the nuclear entry of host CDK1/cyclin B1 complexes. Inhibits cellular DNA replication by preventing loading of host replication licensing proteins MCM2 and MCM7 onto chromatin. Within the cytoplasm, associates with host kinase SRPK1, a splicing factor regulator, and inhibits its activity. Therefore, E4 favors expression of late viral transcripts by inhibiting SRPK1-mediated phosphorylation of host serine-arginine (SR) proteins that have critical roles in mRNA metabolism. Late in the infectious cycle, E4 also acts to diminish the integrity of the keratinocyte by disrupting the keratin cytoskeleton and inducing apoptosis through alteration of mitochondrial function to facilitate egress of the newly formed virions.</text>
</comment>
<comment type="subunit">
    <text evidence="1">Assembles into oligomeric complexes. Interacts with host CDK1. Interacts with host SRPK1; this interaction may favor expression of late viral transcripts. Interacts with host cytokeratin components KRT8 and KRT18.</text>
</comment>
<comment type="subcellular location">
    <subcellularLocation>
        <location evidence="1">Host cytoplasm</location>
    </subcellularLocation>
    <subcellularLocation>
        <location evidence="1">Host nucleus</location>
    </subcellularLocation>
</comment>
<comment type="PTM">
    <text evidence="1">Phosphorylated by host ERK. The phosphorylation triggers a structural change that enhances keratin binding and protein stability.</text>
</comment>
<comment type="miscellaneous">
    <text evidence="1">The major E4 form is first synthesized as an E1^E4 fusion protein from spliced E1^E4 transcripts, such that the first few amino acids of the E4 protein are derived from the N terminus of E1.</text>
</comment>
<comment type="similarity">
    <text evidence="3">Belongs to the papillomaviridae E4 protein family.</text>
</comment>
<protein>
    <recommendedName>
        <fullName>Protein E4</fullName>
    </recommendedName>
</protein>
<dbReference type="EMBL" id="X55965">
    <property type="protein sequence ID" value="CAA39434.1"/>
    <property type="molecule type" value="Genomic_DNA"/>
</dbReference>
<dbReference type="PIR" id="S15625">
    <property type="entry name" value="S15625"/>
</dbReference>
<dbReference type="Proteomes" id="UP000007667">
    <property type="component" value="Genome"/>
</dbReference>
<dbReference type="GO" id="GO:0030430">
    <property type="term" value="C:host cell cytoplasm"/>
    <property type="evidence" value="ECO:0007669"/>
    <property type="project" value="UniProtKB-SubCell"/>
</dbReference>
<dbReference type="GO" id="GO:0042025">
    <property type="term" value="C:host cell nucleus"/>
    <property type="evidence" value="ECO:0007669"/>
    <property type="project" value="UniProtKB-SubCell"/>
</dbReference>
<dbReference type="GO" id="GO:0039592">
    <property type="term" value="P:symbiont-mediated arrest of host cell cycle during G2/M transition"/>
    <property type="evidence" value="ECO:0007669"/>
    <property type="project" value="UniProtKB-KW"/>
</dbReference>
<dbReference type="InterPro" id="IPR003861">
    <property type="entry name" value="Papilloma_E4"/>
</dbReference>
<dbReference type="Pfam" id="PF02711">
    <property type="entry name" value="Pap_E4"/>
    <property type="match status" value="1"/>
</dbReference>
<gene>
    <name type="primary">E4</name>
</gene>